<reference key="1">
    <citation type="journal article" date="2005" name="J. Bacteriol.">
        <title>Completion of the genome sequence of Brucella abortus and comparison to the highly similar genomes of Brucella melitensis and Brucella suis.</title>
        <authorList>
            <person name="Halling S.M."/>
            <person name="Peterson-Burch B.D."/>
            <person name="Bricker B.J."/>
            <person name="Zuerner R.L."/>
            <person name="Qing Z."/>
            <person name="Li L.-L."/>
            <person name="Kapur V."/>
            <person name="Alt D.P."/>
            <person name="Olsen S.C."/>
        </authorList>
    </citation>
    <scope>NUCLEOTIDE SEQUENCE [LARGE SCALE GENOMIC DNA]</scope>
    <source>
        <strain>9-941</strain>
    </source>
</reference>
<dbReference type="EC" id="2.8.4.4" evidence="1"/>
<dbReference type="EMBL" id="AE017224">
    <property type="protein sequence ID" value="AAX76068.1"/>
    <property type="molecule type" value="Genomic_DNA"/>
</dbReference>
<dbReference type="RefSeq" id="WP_002966068.1">
    <property type="nucleotide sequence ID" value="NC_006933.1"/>
</dbReference>
<dbReference type="SMR" id="Q577W6"/>
<dbReference type="EnsemblBacteria" id="AAX76068">
    <property type="protein sequence ID" value="AAX76068"/>
    <property type="gene ID" value="BruAb2_0658"/>
</dbReference>
<dbReference type="GeneID" id="93015440"/>
<dbReference type="KEGG" id="bmb:BruAb2_0658"/>
<dbReference type="HOGENOM" id="CLU_018697_0_0_5"/>
<dbReference type="Proteomes" id="UP000000540">
    <property type="component" value="Chromosome II"/>
</dbReference>
<dbReference type="GO" id="GO:0005829">
    <property type="term" value="C:cytosol"/>
    <property type="evidence" value="ECO:0007669"/>
    <property type="project" value="TreeGrafter"/>
</dbReference>
<dbReference type="GO" id="GO:0051539">
    <property type="term" value="F:4 iron, 4 sulfur cluster binding"/>
    <property type="evidence" value="ECO:0007669"/>
    <property type="project" value="UniProtKB-UniRule"/>
</dbReference>
<dbReference type="GO" id="GO:0035599">
    <property type="term" value="F:aspartic acid methylthiotransferase activity"/>
    <property type="evidence" value="ECO:0007669"/>
    <property type="project" value="TreeGrafter"/>
</dbReference>
<dbReference type="GO" id="GO:0046872">
    <property type="term" value="F:metal ion binding"/>
    <property type="evidence" value="ECO:0007669"/>
    <property type="project" value="UniProtKB-KW"/>
</dbReference>
<dbReference type="GO" id="GO:0103039">
    <property type="term" value="F:protein methylthiotransferase activity"/>
    <property type="evidence" value="ECO:0007669"/>
    <property type="project" value="UniProtKB-EC"/>
</dbReference>
<dbReference type="GO" id="GO:0006400">
    <property type="term" value="P:tRNA modification"/>
    <property type="evidence" value="ECO:0007669"/>
    <property type="project" value="InterPro"/>
</dbReference>
<dbReference type="CDD" id="cd01335">
    <property type="entry name" value="Radical_SAM"/>
    <property type="match status" value="1"/>
</dbReference>
<dbReference type="FunFam" id="3.40.50.12160:FF:000002">
    <property type="entry name" value="Ribosomal protein S12 methylthiotransferase RimO"/>
    <property type="match status" value="1"/>
</dbReference>
<dbReference type="FunFam" id="3.80.30.20:FF:000001">
    <property type="entry name" value="tRNA-2-methylthio-N(6)-dimethylallyladenosine synthase 2"/>
    <property type="match status" value="1"/>
</dbReference>
<dbReference type="Gene3D" id="3.40.50.12160">
    <property type="entry name" value="Methylthiotransferase, N-terminal domain"/>
    <property type="match status" value="1"/>
</dbReference>
<dbReference type="Gene3D" id="2.40.50.140">
    <property type="entry name" value="Nucleic acid-binding proteins"/>
    <property type="match status" value="1"/>
</dbReference>
<dbReference type="Gene3D" id="3.80.30.20">
    <property type="entry name" value="tm_1862 like domain"/>
    <property type="match status" value="1"/>
</dbReference>
<dbReference type="HAMAP" id="MF_01865">
    <property type="entry name" value="MTTase_RimO"/>
    <property type="match status" value="1"/>
</dbReference>
<dbReference type="InterPro" id="IPR006638">
    <property type="entry name" value="Elp3/MiaA/NifB-like_rSAM"/>
</dbReference>
<dbReference type="InterPro" id="IPR005839">
    <property type="entry name" value="Methylthiotransferase"/>
</dbReference>
<dbReference type="InterPro" id="IPR020612">
    <property type="entry name" value="Methylthiotransferase_CS"/>
</dbReference>
<dbReference type="InterPro" id="IPR013848">
    <property type="entry name" value="Methylthiotransferase_N"/>
</dbReference>
<dbReference type="InterPro" id="IPR038135">
    <property type="entry name" value="Methylthiotransferase_N_sf"/>
</dbReference>
<dbReference type="InterPro" id="IPR012340">
    <property type="entry name" value="NA-bd_OB-fold"/>
</dbReference>
<dbReference type="InterPro" id="IPR005840">
    <property type="entry name" value="Ribosomal_uS12_MeSTrfase_RimO"/>
</dbReference>
<dbReference type="InterPro" id="IPR007197">
    <property type="entry name" value="rSAM"/>
</dbReference>
<dbReference type="InterPro" id="IPR023404">
    <property type="entry name" value="rSAM_horseshoe"/>
</dbReference>
<dbReference type="InterPro" id="IPR002792">
    <property type="entry name" value="TRAM_dom"/>
</dbReference>
<dbReference type="NCBIfam" id="TIGR01125">
    <property type="entry name" value="30S ribosomal protein S12 methylthiotransferase RimO"/>
    <property type="match status" value="1"/>
</dbReference>
<dbReference type="NCBIfam" id="TIGR00089">
    <property type="entry name" value="MiaB/RimO family radical SAM methylthiotransferase"/>
    <property type="match status" value="1"/>
</dbReference>
<dbReference type="PANTHER" id="PTHR43837">
    <property type="entry name" value="RIBOSOMAL PROTEIN S12 METHYLTHIOTRANSFERASE RIMO"/>
    <property type="match status" value="1"/>
</dbReference>
<dbReference type="PANTHER" id="PTHR43837:SF1">
    <property type="entry name" value="RIBOSOMAL PROTEIN US12 METHYLTHIOTRANSFERASE RIMO"/>
    <property type="match status" value="1"/>
</dbReference>
<dbReference type="Pfam" id="PF04055">
    <property type="entry name" value="Radical_SAM"/>
    <property type="match status" value="1"/>
</dbReference>
<dbReference type="Pfam" id="PF18693">
    <property type="entry name" value="TRAM_2"/>
    <property type="match status" value="1"/>
</dbReference>
<dbReference type="Pfam" id="PF00919">
    <property type="entry name" value="UPF0004"/>
    <property type="match status" value="1"/>
</dbReference>
<dbReference type="SFLD" id="SFLDG01082">
    <property type="entry name" value="B12-binding_domain_containing"/>
    <property type="match status" value="1"/>
</dbReference>
<dbReference type="SFLD" id="SFLDG01061">
    <property type="entry name" value="methylthiotransferase"/>
    <property type="match status" value="1"/>
</dbReference>
<dbReference type="SFLD" id="SFLDF00274">
    <property type="entry name" value="ribosomal_protein_S12_methylth"/>
    <property type="match status" value="1"/>
</dbReference>
<dbReference type="SMART" id="SM00729">
    <property type="entry name" value="Elp3"/>
    <property type="match status" value="1"/>
</dbReference>
<dbReference type="SUPFAM" id="SSF102114">
    <property type="entry name" value="Radical SAM enzymes"/>
    <property type="match status" value="1"/>
</dbReference>
<dbReference type="PROSITE" id="PS51449">
    <property type="entry name" value="MTTASE_N"/>
    <property type="match status" value="1"/>
</dbReference>
<dbReference type="PROSITE" id="PS01278">
    <property type="entry name" value="MTTASE_RADICAL"/>
    <property type="match status" value="1"/>
</dbReference>
<dbReference type="PROSITE" id="PS51918">
    <property type="entry name" value="RADICAL_SAM"/>
    <property type="match status" value="1"/>
</dbReference>
<dbReference type="PROSITE" id="PS50926">
    <property type="entry name" value="TRAM"/>
    <property type="match status" value="1"/>
</dbReference>
<accession>Q577W6</accession>
<gene>
    <name evidence="1" type="primary">rimO</name>
    <name type="ordered locus">BruAb2_0658</name>
</gene>
<sequence>MSAPRVSFVSLGCPKALVDSERIITGLRSEGYEISRKHDGADLVIVNTCGFLDSARDESLEAIGLALNENGKVIVTGCLGAEPDVIRERHPNVLAITGPQAYESVMNAVHEVAPPAHDPFVDLVPPQGVKLTPRHYAYLKISEGCSNRCSFCIIPALRGDLVSRPINEVLREAEKLVQAGVKEILVISQDTSAYGLDIKYQEAMWQDRTVRTKFLDLSRELGEMGVWVRMHYVYPYPHVDEVIPLMAEGKILPYLDIPFQHASPAVLKNMRRPAHQEKTSRRIQAWRETCPDLAVRSTFIVGYPGETEEDFQMLLDWLDEAKIERAGCFKYEAVKGAKANDLGLEQVPEEVKEARWHRFMAKQQQISTNLLKKKVGKRLPVIIDEANGTIGKGRTRYDAPEIDGSVHISSRRPLRVGDIVTVKIEASDAYDLHGTAV</sequence>
<name>RIMO_BRUAB</name>
<feature type="chain" id="PRO_0000374720" description="Ribosomal protein uS12 methylthiotransferase RimO">
    <location>
        <begin position="1"/>
        <end position="437"/>
    </location>
</feature>
<feature type="domain" description="MTTase N-terminal" evidence="1">
    <location>
        <begin position="4"/>
        <end position="114"/>
    </location>
</feature>
<feature type="domain" description="Radical SAM core" evidence="2">
    <location>
        <begin position="131"/>
        <end position="369"/>
    </location>
</feature>
<feature type="domain" description="TRAM" evidence="1">
    <location>
        <begin position="372"/>
        <end position="437"/>
    </location>
</feature>
<feature type="binding site" evidence="1">
    <location>
        <position position="13"/>
    </location>
    <ligand>
        <name>[4Fe-4S] cluster</name>
        <dbReference type="ChEBI" id="CHEBI:49883"/>
        <label>1</label>
    </ligand>
</feature>
<feature type="binding site" evidence="1">
    <location>
        <position position="49"/>
    </location>
    <ligand>
        <name>[4Fe-4S] cluster</name>
        <dbReference type="ChEBI" id="CHEBI:49883"/>
        <label>1</label>
    </ligand>
</feature>
<feature type="binding site" evidence="1">
    <location>
        <position position="78"/>
    </location>
    <ligand>
        <name>[4Fe-4S] cluster</name>
        <dbReference type="ChEBI" id="CHEBI:49883"/>
        <label>1</label>
    </ligand>
</feature>
<feature type="binding site" evidence="1">
    <location>
        <position position="145"/>
    </location>
    <ligand>
        <name>[4Fe-4S] cluster</name>
        <dbReference type="ChEBI" id="CHEBI:49883"/>
        <label>2</label>
        <note>4Fe-4S-S-AdoMet</note>
    </ligand>
</feature>
<feature type="binding site" evidence="1">
    <location>
        <position position="149"/>
    </location>
    <ligand>
        <name>[4Fe-4S] cluster</name>
        <dbReference type="ChEBI" id="CHEBI:49883"/>
        <label>2</label>
        <note>4Fe-4S-S-AdoMet</note>
    </ligand>
</feature>
<feature type="binding site" evidence="1">
    <location>
        <position position="152"/>
    </location>
    <ligand>
        <name>[4Fe-4S] cluster</name>
        <dbReference type="ChEBI" id="CHEBI:49883"/>
        <label>2</label>
        <note>4Fe-4S-S-AdoMet</note>
    </ligand>
</feature>
<keyword id="KW-0004">4Fe-4S</keyword>
<keyword id="KW-0963">Cytoplasm</keyword>
<keyword id="KW-0408">Iron</keyword>
<keyword id="KW-0411">Iron-sulfur</keyword>
<keyword id="KW-0479">Metal-binding</keyword>
<keyword id="KW-0949">S-adenosyl-L-methionine</keyword>
<keyword id="KW-0808">Transferase</keyword>
<proteinExistence type="inferred from homology"/>
<protein>
    <recommendedName>
        <fullName evidence="1">Ribosomal protein uS12 methylthiotransferase RimO</fullName>
        <shortName evidence="1">uS12 MTTase</shortName>
        <shortName evidence="1">uS12 methylthiotransferase</shortName>
        <ecNumber evidence="1">2.8.4.4</ecNumber>
    </recommendedName>
    <alternativeName>
        <fullName evidence="1">Ribosomal protein uS12 (aspartate-C(3))-methylthiotransferase</fullName>
    </alternativeName>
    <alternativeName>
        <fullName evidence="1">Ribosome maturation factor RimO</fullName>
    </alternativeName>
</protein>
<evidence type="ECO:0000255" key="1">
    <source>
        <dbReference type="HAMAP-Rule" id="MF_01865"/>
    </source>
</evidence>
<evidence type="ECO:0000255" key="2">
    <source>
        <dbReference type="PROSITE-ProRule" id="PRU01266"/>
    </source>
</evidence>
<comment type="function">
    <text evidence="1">Catalyzes the methylthiolation of an aspartic acid residue of ribosomal protein uS12.</text>
</comment>
<comment type="catalytic activity">
    <reaction evidence="1">
        <text>L-aspartate(89)-[ribosomal protein uS12]-hydrogen + (sulfur carrier)-SH + AH2 + 2 S-adenosyl-L-methionine = 3-methylsulfanyl-L-aspartate(89)-[ribosomal protein uS12]-hydrogen + (sulfur carrier)-H + 5'-deoxyadenosine + L-methionine + A + S-adenosyl-L-homocysteine + 2 H(+)</text>
        <dbReference type="Rhea" id="RHEA:37087"/>
        <dbReference type="Rhea" id="RHEA-COMP:10460"/>
        <dbReference type="Rhea" id="RHEA-COMP:10461"/>
        <dbReference type="Rhea" id="RHEA-COMP:14737"/>
        <dbReference type="Rhea" id="RHEA-COMP:14739"/>
        <dbReference type="ChEBI" id="CHEBI:13193"/>
        <dbReference type="ChEBI" id="CHEBI:15378"/>
        <dbReference type="ChEBI" id="CHEBI:17319"/>
        <dbReference type="ChEBI" id="CHEBI:17499"/>
        <dbReference type="ChEBI" id="CHEBI:29917"/>
        <dbReference type="ChEBI" id="CHEBI:29961"/>
        <dbReference type="ChEBI" id="CHEBI:57844"/>
        <dbReference type="ChEBI" id="CHEBI:57856"/>
        <dbReference type="ChEBI" id="CHEBI:59789"/>
        <dbReference type="ChEBI" id="CHEBI:64428"/>
        <dbReference type="ChEBI" id="CHEBI:73599"/>
        <dbReference type="EC" id="2.8.4.4"/>
    </reaction>
</comment>
<comment type="cofactor">
    <cofactor evidence="1">
        <name>[4Fe-4S] cluster</name>
        <dbReference type="ChEBI" id="CHEBI:49883"/>
    </cofactor>
    <text evidence="1">Binds 2 [4Fe-4S] clusters. One cluster is coordinated with 3 cysteines and an exchangeable S-adenosyl-L-methionine.</text>
</comment>
<comment type="subcellular location">
    <subcellularLocation>
        <location evidence="1">Cytoplasm</location>
    </subcellularLocation>
</comment>
<comment type="similarity">
    <text evidence="1">Belongs to the methylthiotransferase family. RimO subfamily.</text>
</comment>
<organism>
    <name type="scientific">Brucella abortus biovar 1 (strain 9-941)</name>
    <dbReference type="NCBI Taxonomy" id="262698"/>
    <lineage>
        <taxon>Bacteria</taxon>
        <taxon>Pseudomonadati</taxon>
        <taxon>Pseudomonadota</taxon>
        <taxon>Alphaproteobacteria</taxon>
        <taxon>Hyphomicrobiales</taxon>
        <taxon>Brucellaceae</taxon>
        <taxon>Brucella/Ochrobactrum group</taxon>
        <taxon>Brucella</taxon>
    </lineage>
</organism>